<dbReference type="EMBL" id="AE014075">
    <property type="protein sequence ID" value="AAN80804.1"/>
    <property type="molecule type" value="Genomic_DNA"/>
</dbReference>
<dbReference type="RefSeq" id="WP_000790504.1">
    <property type="nucleotide sequence ID" value="NZ_CP051263.1"/>
</dbReference>
<dbReference type="BMRB" id="P0AA32"/>
<dbReference type="SMR" id="P0AA32"/>
<dbReference type="STRING" id="199310.c2345"/>
<dbReference type="GeneID" id="93775259"/>
<dbReference type="KEGG" id="ecc:c2345"/>
<dbReference type="eggNOG" id="COG0425">
    <property type="taxonomic scope" value="Bacteria"/>
</dbReference>
<dbReference type="HOGENOM" id="CLU_165255_0_0_6"/>
<dbReference type="BioCyc" id="ECOL199310:C2345-MONOMER"/>
<dbReference type="Proteomes" id="UP000001410">
    <property type="component" value="Chromosome"/>
</dbReference>
<dbReference type="CDD" id="cd03422">
    <property type="entry name" value="YedF"/>
    <property type="match status" value="1"/>
</dbReference>
<dbReference type="FunFam" id="3.30.110.40:FF:000001">
    <property type="entry name" value="SirA-like family protein"/>
    <property type="match status" value="1"/>
</dbReference>
<dbReference type="Gene3D" id="3.30.110.40">
    <property type="entry name" value="TusA-like domain"/>
    <property type="match status" value="1"/>
</dbReference>
<dbReference type="InterPro" id="IPR001455">
    <property type="entry name" value="TusA-like"/>
</dbReference>
<dbReference type="InterPro" id="IPR036868">
    <property type="entry name" value="TusA-like_sf"/>
</dbReference>
<dbReference type="InterPro" id="IPR049570">
    <property type="entry name" value="YedF"/>
</dbReference>
<dbReference type="NCBIfam" id="NF008242">
    <property type="entry name" value="PRK11018.1"/>
    <property type="match status" value="1"/>
</dbReference>
<dbReference type="PANTHER" id="PTHR33279">
    <property type="entry name" value="SULFUR CARRIER PROTEIN YEDF-RELATED"/>
    <property type="match status" value="1"/>
</dbReference>
<dbReference type="PANTHER" id="PTHR33279:SF6">
    <property type="entry name" value="SULFUR CARRIER PROTEIN YEDF-RELATED"/>
    <property type="match status" value="1"/>
</dbReference>
<dbReference type="Pfam" id="PF01206">
    <property type="entry name" value="TusA"/>
    <property type="match status" value="1"/>
</dbReference>
<dbReference type="SUPFAM" id="SSF64307">
    <property type="entry name" value="SirA-like"/>
    <property type="match status" value="1"/>
</dbReference>
<dbReference type="PROSITE" id="PS01148">
    <property type="entry name" value="UPF0033"/>
    <property type="match status" value="1"/>
</dbReference>
<reference key="1">
    <citation type="journal article" date="2002" name="Proc. Natl. Acad. Sci. U.S.A.">
        <title>Extensive mosaic structure revealed by the complete genome sequence of uropathogenic Escherichia coli.</title>
        <authorList>
            <person name="Welch R.A."/>
            <person name="Burland V."/>
            <person name="Plunkett G. III"/>
            <person name="Redford P."/>
            <person name="Roesch P."/>
            <person name="Rasko D."/>
            <person name="Buckles E.L."/>
            <person name="Liou S.-R."/>
            <person name="Boutin A."/>
            <person name="Hackett J."/>
            <person name="Stroud D."/>
            <person name="Mayhew G.F."/>
            <person name="Rose D.J."/>
            <person name="Zhou S."/>
            <person name="Schwartz D.C."/>
            <person name="Perna N.T."/>
            <person name="Mobley H.L.T."/>
            <person name="Donnenberg M.S."/>
            <person name="Blattner F.R."/>
        </authorList>
    </citation>
    <scope>NUCLEOTIDE SEQUENCE [LARGE SCALE GENOMIC DNA]</scope>
    <source>
        <strain>CFT073 / ATCC 700928 / UPEC</strain>
    </source>
</reference>
<evidence type="ECO:0000250" key="1">
    <source>
        <dbReference type="UniProtKB" id="P0A890"/>
    </source>
</evidence>
<evidence type="ECO:0000305" key="2"/>
<feature type="chain" id="PRO_0000159063" description="Putative sulfur carrier protein YedF">
    <location>
        <begin position="1"/>
        <end position="77"/>
    </location>
</feature>
<feature type="active site" description="Cysteine persulfide intermediate" evidence="1">
    <location>
        <position position="17"/>
    </location>
</feature>
<proteinExistence type="inferred from homology"/>
<organism>
    <name type="scientific">Escherichia coli O6:H1 (strain CFT073 / ATCC 700928 / UPEC)</name>
    <dbReference type="NCBI Taxonomy" id="199310"/>
    <lineage>
        <taxon>Bacteria</taxon>
        <taxon>Pseudomonadati</taxon>
        <taxon>Pseudomonadota</taxon>
        <taxon>Gammaproteobacteria</taxon>
        <taxon>Enterobacterales</taxon>
        <taxon>Enterobacteriaceae</taxon>
        <taxon>Escherichia</taxon>
    </lineage>
</organism>
<comment type="similarity">
    <text evidence="2">Belongs to the sulfur carrier protein TusA family.</text>
</comment>
<keyword id="KW-1185">Reference proteome</keyword>
<gene>
    <name type="primary">yedF</name>
    <name type="ordered locus">c2345</name>
</gene>
<protein>
    <recommendedName>
        <fullName>Putative sulfur carrier protein YedF</fullName>
    </recommendedName>
</protein>
<accession>P0AA32</accession>
<accession>P31065</accession>
<sequence>MKNIVPDYRLDMVGEPCPYPAVATLEAMPQLKKGEILEVVSDCPQSINNIPLDARNHGYTVLDIQQDGPTIRYLIQK</sequence>
<name>YEDF_ECOL6</name>